<gene>
    <name type="primary">MGP</name>
</gene>
<organism>
    <name type="scientific">Bos taurus</name>
    <name type="common">Bovine</name>
    <dbReference type="NCBI Taxonomy" id="9913"/>
    <lineage>
        <taxon>Eukaryota</taxon>
        <taxon>Metazoa</taxon>
        <taxon>Chordata</taxon>
        <taxon>Craniata</taxon>
        <taxon>Vertebrata</taxon>
        <taxon>Euteleostomi</taxon>
        <taxon>Mammalia</taxon>
        <taxon>Eutheria</taxon>
        <taxon>Laurasiatheria</taxon>
        <taxon>Artiodactyla</taxon>
        <taxon>Ruminantia</taxon>
        <taxon>Pecora</taxon>
        <taxon>Bovidae</taxon>
        <taxon>Bovinae</taxon>
        <taxon>Bos</taxon>
    </lineage>
</organism>
<evidence type="ECO:0000255" key="1">
    <source>
        <dbReference type="PROSITE-ProRule" id="PRU00463"/>
    </source>
</evidence>
<evidence type="ECO:0000269" key="2">
    <source>
    </source>
</evidence>
<evidence type="ECO:0000269" key="3">
    <source>
    </source>
</evidence>
<evidence type="ECO:0000269" key="4">
    <source>
    </source>
</evidence>
<evidence type="ECO:0000305" key="5"/>
<comment type="function">
    <text>Associates with the organic matrix of bone and cartilage. Thought to act as an inhibitor of bone formation.</text>
</comment>
<comment type="subcellular location">
    <subcellularLocation>
        <location>Secreted</location>
    </subcellularLocation>
</comment>
<comment type="PTM">
    <text>Requires vitamin K-dependent gamma-carboxylation for its function.</text>
</comment>
<comment type="similarity">
    <text evidence="5">Belongs to the osteocalcin/matrix Gla protein family.</text>
</comment>
<protein>
    <recommendedName>
        <fullName>Matrix Gla protein</fullName>
        <shortName>MGP</shortName>
    </recommendedName>
    <component>
        <recommendedName>
            <fullName>Matrix Gla protein long form</fullName>
        </recommendedName>
    </component>
    <component>
        <recommendedName>
            <fullName>Matrix Gla protein short form</fullName>
        </recommendedName>
    </component>
</protein>
<name>MGP_BOVIN</name>
<keyword id="KW-0891">Chondrogenesis</keyword>
<keyword id="KW-0217">Developmental protein</keyword>
<keyword id="KW-0221">Differentiation</keyword>
<keyword id="KW-0903">Direct protein sequencing</keyword>
<keyword id="KW-1015">Disulfide bond</keyword>
<keyword id="KW-0301">Gamma-carboxyglutamic acid</keyword>
<keyword id="KW-0892">Osteogenesis</keyword>
<keyword id="KW-0597">Phosphoprotein</keyword>
<keyword id="KW-1185">Reference proteome</keyword>
<keyword id="KW-0964">Secreted</keyword>
<keyword id="KW-0732">Signal</keyword>
<feature type="signal peptide" evidence="3">
    <location>
        <begin position="1"/>
        <end position="19"/>
    </location>
</feature>
<feature type="chain" id="PRO_0000011104" description="Matrix Gla protein long form" evidence="2">
    <location>
        <begin position="20"/>
        <end position="102"/>
    </location>
</feature>
<feature type="chain" id="PRO_0000011105" description="Matrix Gla protein short form" evidence="2">
    <location>
        <begin position="20"/>
        <end position="98"/>
    </location>
</feature>
<feature type="propeptide" id="PRO_0000011106" description="Removed in short form; probably by carboxypeptidase N">
    <location>
        <begin position="99"/>
        <end position="102"/>
    </location>
</feature>
<feature type="propeptide" id="PRO_0000011107" description="Removed in long form; probably by carboxypeptidase H">
    <location>
        <position position="103"/>
    </location>
</feature>
<feature type="domain" description="Gla" evidence="1">
    <location>
        <begin position="51"/>
        <end position="97"/>
    </location>
</feature>
<feature type="modified residue" description="4-carboxyglutamate; partial" evidence="1 3">
    <location>
        <position position="21"/>
    </location>
</feature>
<feature type="modified residue" description="Phosphoserine" evidence="4">
    <location>
        <position position="22"/>
    </location>
</feature>
<feature type="modified residue" description="Phosphoserine" evidence="4">
    <location>
        <position position="25"/>
    </location>
</feature>
<feature type="modified residue" description="Phosphoserine" evidence="4">
    <location>
        <position position="28"/>
    </location>
</feature>
<feature type="modified residue" description="4-carboxyglutamate" evidence="1 3">
    <location>
        <position position="56"/>
    </location>
</feature>
<feature type="modified residue" description="4-carboxyglutamate" evidence="1 3">
    <location>
        <position position="60"/>
    </location>
</feature>
<feature type="modified residue" description="4-carboxyglutamate" evidence="1 3">
    <location>
        <position position="67"/>
    </location>
</feature>
<feature type="modified residue" description="4-carboxyglutamate" evidence="1 3">
    <location>
        <position position="71"/>
    </location>
</feature>
<feature type="disulfide bond">
    <location>
        <begin position="73"/>
        <end position="79"/>
    </location>
</feature>
<proteinExistence type="evidence at protein level"/>
<sequence>MKSLLLLSILAALAVAALCYESHESLESYEINPFINRRNANSFISPQQRWRAKAQERIRELNKPQYELNREACDDFKLCERYAMVYGYNAAYDRYFRQRRGAK</sequence>
<reference key="1">
    <citation type="journal article" date="1988" name="Nucleic Acids Res.">
        <title>The cDNA and derived amino acid sequences for human and bovine matrix Gla protein.</title>
        <authorList>
            <person name="Kiefer M.C."/>
            <person name="Bauer D.M."/>
            <person name="Young D."/>
            <person name="Hermsen K.M."/>
            <person name="Masiarz F.K."/>
            <person name="Barr P.J."/>
        </authorList>
    </citation>
    <scope>NUCLEOTIDE SEQUENCE [MRNA]</scope>
</reference>
<reference key="2">
    <citation type="submission" date="1999-12" db="EMBL/GenBank/DDBJ databases">
        <title>Differential expression of matrix Gla protein, alpha enolase, and annexin V within the epiphyseal growth plate and in human osteoarthritic tissue.</title>
        <authorList>
            <person name="Chapman K.L."/>
            <person name="Newman B."/>
            <person name="Freemont A.J."/>
            <person name="Hillarby M.C."/>
            <person name="Grant M.E."/>
            <person name="Boot-Handford R.P."/>
            <person name="Wallis G.A."/>
        </authorList>
    </citation>
    <scope>NUCLEOTIDE SEQUENCE [MRNA]</scope>
</reference>
<reference key="3">
    <citation type="journal article" date="2003" name="Mol. Reprod. Dev.">
        <title>Characterization of gene expression profiles in early bovine pregnancy using a custom cDNA microarray.</title>
        <authorList>
            <person name="Ishiwata H."/>
            <person name="Katsuma S."/>
            <person name="Kizaki K."/>
            <person name="Patel O.V."/>
            <person name="Nakano H."/>
            <person name="Takahashi T."/>
            <person name="Imai K."/>
            <person name="Hirasawa A."/>
            <person name="Shiojima S."/>
            <person name="Ikawa H."/>
            <person name="Suzuki Y."/>
            <person name="Tsujimoto G."/>
            <person name="Izaike Y."/>
            <person name="Todoroki J."/>
            <person name="Hashizume K."/>
        </authorList>
    </citation>
    <scope>NUCLEOTIDE SEQUENCE [LARGE SCALE MRNA]</scope>
</reference>
<reference key="4">
    <citation type="submission" date="2005-08" db="EMBL/GenBank/DDBJ databases">
        <authorList>
            <consortium name="NIH - Mammalian Gene Collection (MGC) project"/>
        </authorList>
    </citation>
    <scope>NUCLEOTIDE SEQUENCE [LARGE SCALE MRNA]</scope>
    <source>
        <strain>Crossbred X Angus</strain>
        <tissue>Ileum</tissue>
    </source>
</reference>
<reference key="5">
    <citation type="journal article" date="1985" name="J. Biol. Chem.">
        <title>Primary structure of bovine matrix Gla protein, a new vitamin K-dependent bone protein.</title>
        <authorList>
            <person name="Price P.A."/>
            <person name="Williamson M.K."/>
        </authorList>
    </citation>
    <scope>PROTEIN SEQUENCE OF 20-98</scope>
    <scope>GAMMA-CARBOXYGLUTAMATION AT GLU-21; GLU-56; GLU-60; GLU-67 AND GLU-71</scope>
</reference>
<reference key="6">
    <citation type="journal article" date="1994" name="Protein Sci.">
        <title>Conserved phosphorylation of serines in the Ser-X-Glu/Ser(P) sequences of the vitamin K-dependent matrix Gla protein from shark, lamb, rat, cow, and human.</title>
        <authorList>
            <person name="Price P.A."/>
            <person name="Rice J.S."/>
            <person name="Williamson M.K."/>
        </authorList>
    </citation>
    <scope>PHOSPHORYLATION AT SER-22; SER-25 AND SER-28</scope>
</reference>
<reference key="7">
    <citation type="journal article" date="1991" name="J. Biol. Chem.">
        <title>Carboxyl-terminal proteolytic processing of matrix Gla protein.</title>
        <authorList>
            <person name="Hale J.E."/>
            <person name="Williamson M.K."/>
            <person name="Price P.A."/>
        </authorList>
    </citation>
    <scope>PARTIAL PROTEIN SEQUENCE</scope>
    <scope>PROTEOLYTIC PROCESSING OF C-TERMINAL</scope>
</reference>
<accession>P07507</accession>
<accession>Q54A30</accession>
<dbReference type="EMBL" id="X07363">
    <property type="protein sequence ID" value="CAA30288.1"/>
    <property type="molecule type" value="mRNA"/>
</dbReference>
<dbReference type="EMBL" id="AF210379">
    <property type="protein sequence ID" value="AAF25880.1"/>
    <property type="molecule type" value="mRNA"/>
</dbReference>
<dbReference type="EMBL" id="AB098895">
    <property type="protein sequence ID" value="BAC56385.1"/>
    <property type="molecule type" value="mRNA"/>
</dbReference>
<dbReference type="EMBL" id="BC102587">
    <property type="protein sequence ID" value="AAI02588.1"/>
    <property type="molecule type" value="mRNA"/>
</dbReference>
<dbReference type="PIR" id="S01232">
    <property type="entry name" value="GEBOM"/>
</dbReference>
<dbReference type="RefSeq" id="NP_777132.1">
    <property type="nucleotide sequence ID" value="NM_174707.3"/>
</dbReference>
<dbReference type="SMR" id="P07507"/>
<dbReference type="FunCoup" id="P07507">
    <property type="interactions" value="173"/>
</dbReference>
<dbReference type="iPTMnet" id="P07507"/>
<dbReference type="GeneID" id="282660"/>
<dbReference type="KEGG" id="bta:282660"/>
<dbReference type="CTD" id="4256"/>
<dbReference type="InParanoid" id="P07507"/>
<dbReference type="OrthoDB" id="8958520at2759"/>
<dbReference type="Proteomes" id="UP000009136">
    <property type="component" value="Unplaced"/>
</dbReference>
<dbReference type="GO" id="GO:0031012">
    <property type="term" value="C:extracellular matrix"/>
    <property type="evidence" value="ECO:0000318"/>
    <property type="project" value="GO_Central"/>
</dbReference>
<dbReference type="GO" id="GO:0005576">
    <property type="term" value="C:extracellular region"/>
    <property type="evidence" value="ECO:0007669"/>
    <property type="project" value="UniProtKB-SubCell"/>
</dbReference>
<dbReference type="GO" id="GO:0005509">
    <property type="term" value="F:calcium ion binding"/>
    <property type="evidence" value="ECO:0007669"/>
    <property type="project" value="InterPro"/>
</dbReference>
<dbReference type="GO" id="GO:0051216">
    <property type="term" value="P:cartilage development"/>
    <property type="evidence" value="ECO:0007669"/>
    <property type="project" value="UniProtKB-KW"/>
</dbReference>
<dbReference type="GO" id="GO:0030154">
    <property type="term" value="P:cell differentiation"/>
    <property type="evidence" value="ECO:0007669"/>
    <property type="project" value="UniProtKB-KW"/>
</dbReference>
<dbReference type="GO" id="GO:0001503">
    <property type="term" value="P:ossification"/>
    <property type="evidence" value="ECO:0007669"/>
    <property type="project" value="UniProtKB-KW"/>
</dbReference>
<dbReference type="GO" id="GO:0030500">
    <property type="term" value="P:regulation of bone mineralization"/>
    <property type="evidence" value="ECO:0007669"/>
    <property type="project" value="InterPro"/>
</dbReference>
<dbReference type="InterPro" id="IPR035972">
    <property type="entry name" value="GLA-like_dom_SF"/>
</dbReference>
<dbReference type="InterPro" id="IPR000294">
    <property type="entry name" value="GLA_domain"/>
</dbReference>
<dbReference type="InterPro" id="IPR027118">
    <property type="entry name" value="MGP"/>
</dbReference>
<dbReference type="InterPro" id="IPR002384">
    <property type="entry name" value="Osteocalcin/MGP"/>
</dbReference>
<dbReference type="PANTHER" id="PTHR10109">
    <property type="entry name" value="MATRIX GLA PROTEIN"/>
    <property type="match status" value="1"/>
</dbReference>
<dbReference type="PANTHER" id="PTHR10109:SF0">
    <property type="entry name" value="MATRIX GLA PROTEIN"/>
    <property type="match status" value="1"/>
</dbReference>
<dbReference type="PRINTS" id="PR00002">
    <property type="entry name" value="GLABONE"/>
</dbReference>
<dbReference type="SMART" id="SM00069">
    <property type="entry name" value="GLA"/>
    <property type="match status" value="1"/>
</dbReference>
<dbReference type="SUPFAM" id="SSF57630">
    <property type="entry name" value="GLA-domain"/>
    <property type="match status" value="1"/>
</dbReference>
<dbReference type="PROSITE" id="PS00011">
    <property type="entry name" value="GLA_1"/>
    <property type="match status" value="1"/>
</dbReference>
<dbReference type="PROSITE" id="PS50998">
    <property type="entry name" value="GLA_2"/>
    <property type="match status" value="1"/>
</dbReference>